<feature type="chain" id="PRO_0000460430" description="Bilirubin reductase">
    <location>
        <begin position="1"/>
        <end position="373"/>
    </location>
</feature>
<feature type="active site" description="Proton donor" evidence="1">
    <location>
        <position position="168"/>
    </location>
</feature>
<feature type="binding site" evidence="2">
    <location>
        <position position="92"/>
    </location>
    <ligand>
        <name>FMN</name>
        <dbReference type="ChEBI" id="CHEBI:58210"/>
    </ligand>
</feature>
<feature type="binding site" evidence="2">
    <location>
        <position position="215"/>
    </location>
    <ligand>
        <name>FMN</name>
        <dbReference type="ChEBI" id="CHEBI:58210"/>
    </ligand>
</feature>
<feature type="binding site" evidence="2">
    <location>
        <position position="344"/>
    </location>
    <ligand>
        <name>[4Fe-4S] cluster</name>
        <dbReference type="ChEBI" id="CHEBI:49883"/>
    </ligand>
</feature>
<feature type="binding site" evidence="2">
    <location>
        <position position="347"/>
    </location>
    <ligand>
        <name>[4Fe-4S] cluster</name>
        <dbReference type="ChEBI" id="CHEBI:49883"/>
    </ligand>
</feature>
<feature type="binding site" evidence="2">
    <location>
        <position position="351"/>
    </location>
    <ligand>
        <name>[4Fe-4S] cluster</name>
        <dbReference type="ChEBI" id="CHEBI:49883"/>
    </ligand>
</feature>
<feature type="binding site" evidence="2">
    <location>
        <position position="363"/>
    </location>
    <ligand>
        <name>[4Fe-4S] cluster</name>
        <dbReference type="ChEBI" id="CHEBI:49883"/>
    </ligand>
</feature>
<feature type="site" description="Important for catalytic activity, assists active site Arg in protonation of C4" evidence="2">
    <location>
        <position position="257"/>
    </location>
</feature>
<evidence type="ECO:0000250" key="1">
    <source>
        <dbReference type="UniProtKB" id="A0A829NF98"/>
    </source>
</evidence>
<evidence type="ECO:0000250" key="2">
    <source>
        <dbReference type="UniProtKB" id="P42593"/>
    </source>
</evidence>
<evidence type="ECO:0000269" key="3">
    <source>
    </source>
</evidence>
<evidence type="ECO:0000303" key="4">
    <source>
    </source>
</evidence>
<evidence type="ECO:0000305" key="5"/>
<evidence type="ECO:0000305" key="6">
    <source>
    </source>
</evidence>
<evidence type="ECO:0000312" key="7">
    <source>
        <dbReference type="EMBL" id="EGA91966.1"/>
    </source>
</evidence>
<name>BILR_CLOS6</name>
<keyword id="KW-0004">4Fe-4S</keyword>
<keyword id="KW-0285">Flavoprotein</keyword>
<keyword id="KW-0288">FMN</keyword>
<keyword id="KW-0408">Iron</keyword>
<keyword id="KW-0411">Iron-sulfur</keyword>
<keyword id="KW-0479">Metal-binding</keyword>
<keyword id="KW-0520">NAD</keyword>
<keyword id="KW-0560">Oxidoreductase</keyword>
<keyword id="KW-1185">Reference proteome</keyword>
<gene>
    <name evidence="4" type="primary">bilR</name>
    <name evidence="7" type="ORF">HMPREF9474_04134</name>
</gene>
<accession>E7GT89</accession>
<organism>
    <name type="scientific">Clostridium symbiosum (strain WAL-14163)</name>
    <dbReference type="NCBI Taxonomy" id="742740"/>
    <lineage>
        <taxon>Bacteria</taxon>
        <taxon>Bacillati</taxon>
        <taxon>Bacillota</taxon>
        <taxon>Clostridia</taxon>
        <taxon>Lachnospirales</taxon>
        <taxon>Lachnospiraceae</taxon>
    </lineage>
</organism>
<proteinExistence type="evidence at protein level"/>
<protein>
    <recommendedName>
        <fullName evidence="4">Bilirubin reductase</fullName>
        <ecNumber evidence="6">1.3.-.-</ecNumber>
    </recommendedName>
    <alternativeName>
        <fullName evidence="4">Bilirubin reductase operon protein R</fullName>
    </alternativeName>
</protein>
<reference key="1">
    <citation type="submission" date="2010-12" db="EMBL/GenBank/DDBJ databases">
        <title>The Genome Sequence of Clostridium symbiosum strain WAL-14163.</title>
        <authorList>
            <person name="Earl A."/>
            <person name="Ward D."/>
            <person name="Feldgarden M."/>
            <person name="Gevers D."/>
            <person name="Finegold S.M."/>
            <person name="Summanen P.H."/>
            <person name="Molitoris D.R."/>
            <person name="Vaisanen M.L."/>
            <person name="Daigneault M."/>
            <person name="Young S.K."/>
            <person name="Zeng Q."/>
            <person name="Gargeya S."/>
            <person name="Fitzgerald M."/>
            <person name="Haas B."/>
            <person name="Abouelleil A."/>
            <person name="Alvarado L."/>
            <person name="Arachchi H.M."/>
            <person name="Berlin A."/>
            <person name="Brown A."/>
            <person name="Chapman S.B."/>
            <person name="Chen Z."/>
            <person name="Dunbar C."/>
            <person name="Freedman E."/>
            <person name="Gearin G."/>
            <person name="Gellesch M."/>
            <person name="Goldberg J."/>
            <person name="Griggs A."/>
            <person name="Gujja S."/>
            <person name="Heilman E."/>
            <person name="Heiman D."/>
            <person name="Howarth C."/>
            <person name="Larson L."/>
            <person name="Lui A."/>
            <person name="MacDonald P.J.P."/>
            <person name="Mehta T."/>
            <person name="Montmayeur A."/>
            <person name="Murphy C."/>
            <person name="Neiman D."/>
            <person name="Pearson M."/>
            <person name="Priest M."/>
            <person name="Roberts A."/>
            <person name="Saif S."/>
            <person name="Shea T."/>
            <person name="Shenoy N."/>
            <person name="Sisk P."/>
            <person name="Stolte C."/>
            <person name="Sykes S."/>
            <person name="White J."/>
            <person name="Yandava C."/>
            <person name="Nusbaum C."/>
            <person name="Birren B."/>
        </authorList>
    </citation>
    <scope>NUCLEOTIDE SEQUENCE [LARGE SCALE GENOMIC DNA]</scope>
    <source>
        <strain>WAL-14163</strain>
    </source>
</reference>
<reference key="2">
    <citation type="journal article" date="2024" name="Nat. Microbiol.">
        <title>BilR is a gut microbial enzyme that reduces bilirubin to urobilinogen.</title>
        <authorList>
            <person name="Hall B."/>
            <person name="Levy S."/>
            <person name="Dufault-Thompson K."/>
            <person name="Arp G."/>
            <person name="Zhong A."/>
            <person name="Ndjite G.M."/>
            <person name="Weiss A."/>
            <person name="Braccia D."/>
            <person name="Jenkins C."/>
            <person name="Grant M.R."/>
            <person name="Abeysinghe S."/>
            <person name="Yang Y."/>
            <person name="Jermain M.D."/>
            <person name="Wu C.H."/>
            <person name="Ma B."/>
            <person name="Jiang X."/>
        </authorList>
    </citation>
    <scope>FUNCTION</scope>
    <scope>CATALYTIC ACTIVITY</scope>
    <scope>PATHWAY</scope>
</reference>
<sequence length="373" mass="41336">MYEKINEPLSIRGLKLKNRIVFAPTTMGLSEEEYLERLGIIAAGGAAMLVIGDVPVLRHSLFAKSLYSTKGFEFYRRVTEVIHKNGAKACAQLHVSDSDIKGMLRFVPGMLMKRITPDRLRELMNERTGPYITGIPESKIGKITASFGDAAVLAGKAGFDMIQVHGDRMCGSFSSSVFNHRTDSYGASAANRAKFACECIAAVRQALPDMPVEYKLAVRQENPHYGNAGILVEELPVFLPLLEKAGVDSYHVALADHSSLSDTIPPKSHPYFSGEGCFLKYCDEVKKYSSLPVCAVGGLTNPDFVEEQLTRSRIDYAAMSRQLIADPEWPNKTAGKNQDKIRFCVRCNRECLGGMMEHRGVHCIYDKKKEDVQ</sequence>
<dbReference type="EC" id="1.3.-.-" evidence="6"/>
<dbReference type="EMBL" id="ADLQ01000094">
    <property type="protein sequence ID" value="EGA91966.1"/>
    <property type="molecule type" value="Genomic_DNA"/>
</dbReference>
<dbReference type="RefSeq" id="WP_003504328.1">
    <property type="nucleotide sequence ID" value="NZ_GL834319.1"/>
</dbReference>
<dbReference type="SMR" id="E7GT89"/>
<dbReference type="STRING" id="1512.GCA_900049235_04466"/>
<dbReference type="eggNOG" id="COG1902">
    <property type="taxonomic scope" value="Bacteria"/>
</dbReference>
<dbReference type="HOGENOM" id="CLU_012153_2_3_9"/>
<dbReference type="UniPathway" id="UPA00684"/>
<dbReference type="Proteomes" id="UP000002970">
    <property type="component" value="Unassembled WGS sequence"/>
</dbReference>
<dbReference type="GO" id="GO:0051539">
    <property type="term" value="F:4 iron, 4 sulfur cluster binding"/>
    <property type="evidence" value="ECO:0007669"/>
    <property type="project" value="UniProtKB-KW"/>
</dbReference>
<dbReference type="GO" id="GO:0010181">
    <property type="term" value="F:FMN binding"/>
    <property type="evidence" value="ECO:0007669"/>
    <property type="project" value="InterPro"/>
</dbReference>
<dbReference type="GO" id="GO:0046872">
    <property type="term" value="F:metal ion binding"/>
    <property type="evidence" value="ECO:0007669"/>
    <property type="project" value="UniProtKB-KW"/>
</dbReference>
<dbReference type="GO" id="GO:0016627">
    <property type="term" value="F:oxidoreductase activity, acting on the CH-CH group of donors"/>
    <property type="evidence" value="ECO:0000314"/>
    <property type="project" value="UniProtKB"/>
</dbReference>
<dbReference type="GO" id="GO:0006787">
    <property type="term" value="P:porphyrin-containing compound catabolic process"/>
    <property type="evidence" value="ECO:0000314"/>
    <property type="project" value="UniProtKB"/>
</dbReference>
<dbReference type="Gene3D" id="3.20.20.70">
    <property type="entry name" value="Aldolase class I"/>
    <property type="match status" value="1"/>
</dbReference>
<dbReference type="InterPro" id="IPR013785">
    <property type="entry name" value="Aldolase_TIM"/>
</dbReference>
<dbReference type="InterPro" id="IPR054629">
    <property type="entry name" value="BilR_N"/>
</dbReference>
<dbReference type="InterPro" id="IPR051793">
    <property type="entry name" value="NADH:flavin_oxidoreductase"/>
</dbReference>
<dbReference type="InterPro" id="IPR001155">
    <property type="entry name" value="OxRdtase_FMN_N"/>
</dbReference>
<dbReference type="NCBIfam" id="NF045592">
    <property type="entry name" value="bili_reduct_N"/>
    <property type="match status" value="1"/>
</dbReference>
<dbReference type="PANTHER" id="PTHR42917">
    <property type="entry name" value="2,4-DIENOYL-COA REDUCTASE"/>
    <property type="match status" value="1"/>
</dbReference>
<dbReference type="PANTHER" id="PTHR42917:SF2">
    <property type="entry name" value="2,4-DIENOYL-COA REDUCTASE [(2E)-ENOYL-COA-PRODUCING]"/>
    <property type="match status" value="1"/>
</dbReference>
<dbReference type="Pfam" id="PF00724">
    <property type="entry name" value="Oxidored_FMN"/>
    <property type="match status" value="1"/>
</dbReference>
<dbReference type="SUPFAM" id="SSF51395">
    <property type="entry name" value="FMN-linked oxidoreductases"/>
    <property type="match status" value="1"/>
</dbReference>
<comment type="function">
    <text evidence="3">Bilirubin reductase that catalyzes reduction of mesobilirubin and/or bilirubin to urobilinogen, a key step during heme degradation (PubMed:38172624). Cooperates with BilS, which is probably involved in electron transfer for BilR (PubMed:38172624). Urobilinogen then spontaneously degrades into urobilin, which gives urine its distinctive yellow color (PubMed:38172624).</text>
</comment>
<comment type="catalytic activity">
    <reaction evidence="6">
        <text>urobilinogen + 4 A = (4Z,15Z)-bilirubin IXalpha + 4 AH2</text>
        <dbReference type="Rhea" id="RHEA:79055"/>
        <dbReference type="ChEBI" id="CHEBI:13193"/>
        <dbReference type="ChEBI" id="CHEBI:17499"/>
        <dbReference type="ChEBI" id="CHEBI:57977"/>
        <dbReference type="ChEBI" id="CHEBI:228218"/>
    </reaction>
    <physiologicalReaction direction="right-to-left" evidence="6">
        <dbReference type="Rhea" id="RHEA:79057"/>
    </physiologicalReaction>
</comment>
<comment type="catalytic activity">
    <reaction evidence="6">
        <text>urobilinogen + 2 A = (4Z,15Z)-mesobilirubin IXalpha + 2 AH2</text>
        <dbReference type="Rhea" id="RHEA:79063"/>
        <dbReference type="ChEBI" id="CHEBI:13193"/>
        <dbReference type="ChEBI" id="CHEBI:17499"/>
        <dbReference type="ChEBI" id="CHEBI:228218"/>
        <dbReference type="ChEBI" id="CHEBI:229696"/>
    </reaction>
    <physiologicalReaction direction="right-to-left" evidence="6">
        <dbReference type="Rhea" id="RHEA:79065"/>
    </physiologicalReaction>
</comment>
<comment type="cofactor">
    <cofactor evidence="2">
        <name>FMN</name>
        <dbReference type="ChEBI" id="CHEBI:58210"/>
    </cofactor>
</comment>
<comment type="cofactor">
    <cofactor evidence="2">
        <name>[4Fe-4S] cluster</name>
        <dbReference type="ChEBI" id="CHEBI:49883"/>
    </cofactor>
</comment>
<comment type="pathway">
    <text evidence="3">Porphyrin-containing compound metabolism; protoheme degradation.</text>
</comment>
<comment type="miscellaneous">
    <text evidence="3">Bilirubin reductase is a key enzyme in the human gut microbiome (PubMed:38172624). The enzyme is essential to human health, as excess serum bilirubin can cause jaundice and even neurological damage (PubMed:38172624). BilR is nearly universally present in the gut microbiome of healthy adults, while the prevalence of the gene is much lower in patients with inflammatory bowel disease (IBD) and in infants, especially during the first few months of life when infants are most susceptible to developing jaundice (PubMed:38172624).</text>
</comment>
<comment type="similarity">
    <text evidence="5">Belongs to the NADH:flavin oxidoreductase/NADH oxidase family.</text>
</comment>